<accession>P62985</accession>
<accession>P02248</accession>
<accession>P02249</accession>
<accession>P02250</accession>
<accession>P14793</accession>
<accession>P62973</accession>
<accession>Q29120</accession>
<accession>Q91887</accession>
<accession>Q91888</accession>
<sequence>NIQKESTLHLVLRLRGGIIEPSLRQLAQKYNCDKMICRKCYARLHPRAVNCRKKKCGHTNNLRPKKKVK</sequence>
<protein>
    <recommendedName>
        <fullName evidence="4">Ubiquitin-ribosomal protein eL40 fusion protein</fullName>
    </recommendedName>
    <alternativeName>
        <fullName>Ubiquitin A-52 residue ribosomal protein fusion product 1</fullName>
    </alternativeName>
    <component>
        <recommendedName>
            <fullName>Ubiquitin</fullName>
        </recommendedName>
    </component>
    <component>
        <recommendedName>
            <fullName evidence="4">Large ribosomal subunit protein eL40</fullName>
        </recommendedName>
        <alternativeName>
            <fullName>60S ribosomal protein L40</fullName>
        </alternativeName>
        <alternativeName>
            <fullName>CEP52</fullName>
        </alternativeName>
    </component>
</protein>
<dbReference type="EMBL" id="X13493">
    <property type="protein sequence ID" value="CAA31848.1"/>
    <property type="molecule type" value="mRNA"/>
</dbReference>
<dbReference type="SMR" id="P62985"/>
<dbReference type="FunCoup" id="P62985">
    <property type="interactions" value="2092"/>
</dbReference>
<dbReference type="STRING" id="9031.ENSGALP00000062168"/>
<dbReference type="VEuPathDB" id="HostDB:geneid_395958"/>
<dbReference type="InParanoid" id="P62985"/>
<dbReference type="OrthoDB" id="428577at2759"/>
<dbReference type="PhylomeDB" id="P62985"/>
<dbReference type="Reactome" id="R-GGA-1227882">
    <property type="pathway name" value="TRAF mediated activation of IRF"/>
</dbReference>
<dbReference type="Reactome" id="R-GGA-1227888">
    <property type="pathway name" value="Negative Regulation of MDA5 signaling"/>
</dbReference>
<dbReference type="Reactome" id="R-GGA-1227892">
    <property type="pathway name" value="TRAF6 mediated NF-kB activation"/>
</dbReference>
<dbReference type="Reactome" id="R-GGA-351465">
    <property type="pathway name" value="Fanconi Anemia Pathway in DNA repair"/>
</dbReference>
<dbReference type="Reactome" id="R-GGA-353299">
    <property type="pathway name" value="RAD18 and ubiquitinated PCNA-mediated recruitment of translesion polymerases"/>
</dbReference>
<dbReference type="Reactome" id="R-GGA-353303">
    <property type="pathway name" value="Nucleotide Excision Repair"/>
</dbReference>
<dbReference type="Reactome" id="R-GGA-433822">
    <property type="pathway name" value="NFkB and MAPK activation mediated by TRAF6"/>
</dbReference>
<dbReference type="Reactome" id="R-GGA-433871">
    <property type="pathway name" value="TRAF6 mediated induction of proinflammatory cytokines"/>
</dbReference>
<dbReference type="Reactome" id="R-GGA-434001">
    <property type="pathway name" value="TAK1 activates NFkB by phosphorylation and activation of IKKs complex"/>
</dbReference>
<dbReference type="Reactome" id="R-GGA-434131">
    <property type="pathway name" value="NFkB activation mediated by RIP1 complexed with activated TLR3"/>
</dbReference>
<dbReference type="Reactome" id="R-GGA-437980">
    <property type="pathway name" value="Activated TAK1 mediates p38 MAP kinase phosphorylation"/>
</dbReference>
<dbReference type="Reactome" id="R-GGA-437986">
    <property type="pathway name" value="Activated TAK1 mediates Jun kinases (JNK) phosphorylation and activation"/>
</dbReference>
<dbReference type="Reactome" id="R-GGA-573298">
    <property type="pathway name" value="NFkB and MAPK activation mediated by TRAF6 upon TLR7 or TLR21 stimulation"/>
</dbReference>
<dbReference type="Proteomes" id="UP000000539">
    <property type="component" value="Unassembled WGS sequence"/>
</dbReference>
<dbReference type="GO" id="GO:0005737">
    <property type="term" value="C:cytoplasm"/>
    <property type="evidence" value="ECO:0007669"/>
    <property type="project" value="UniProtKB-SubCell"/>
</dbReference>
<dbReference type="GO" id="GO:0005654">
    <property type="term" value="C:nucleoplasm"/>
    <property type="evidence" value="ECO:0000304"/>
    <property type="project" value="Reactome"/>
</dbReference>
<dbReference type="GO" id="GO:1990904">
    <property type="term" value="C:ribonucleoprotein complex"/>
    <property type="evidence" value="ECO:0007669"/>
    <property type="project" value="UniProtKB-KW"/>
</dbReference>
<dbReference type="GO" id="GO:0005840">
    <property type="term" value="C:ribosome"/>
    <property type="evidence" value="ECO:0007669"/>
    <property type="project" value="UniProtKB-KW"/>
</dbReference>
<dbReference type="GO" id="GO:0003735">
    <property type="term" value="F:structural constituent of ribosome"/>
    <property type="evidence" value="ECO:0007669"/>
    <property type="project" value="InterPro"/>
</dbReference>
<dbReference type="GO" id="GO:0006412">
    <property type="term" value="P:translation"/>
    <property type="evidence" value="ECO:0007669"/>
    <property type="project" value="InterPro"/>
</dbReference>
<dbReference type="FunFam" id="4.10.1060.50:FF:000001">
    <property type="entry name" value="ubiquitin-60S ribosomal protein L40"/>
    <property type="match status" value="1"/>
</dbReference>
<dbReference type="Gene3D" id="4.10.1060.50">
    <property type="match status" value="1"/>
</dbReference>
<dbReference type="InterPro" id="IPR001975">
    <property type="entry name" value="Ribosomal_eL40_dom"/>
</dbReference>
<dbReference type="InterPro" id="IPR038587">
    <property type="entry name" value="Ribosomal_eL40_sf"/>
</dbReference>
<dbReference type="InterPro" id="IPR011332">
    <property type="entry name" value="Ribosomal_zn-bd"/>
</dbReference>
<dbReference type="Pfam" id="PF01020">
    <property type="entry name" value="Ribosomal_L40e"/>
    <property type="match status" value="1"/>
</dbReference>
<dbReference type="SMART" id="SM01377">
    <property type="entry name" value="Ribosomal_L40e"/>
    <property type="match status" value="1"/>
</dbReference>
<dbReference type="SUPFAM" id="SSF57829">
    <property type="entry name" value="Zn-binding ribosomal proteins"/>
    <property type="match status" value="1"/>
</dbReference>
<keyword id="KW-0963">Cytoplasm</keyword>
<keyword id="KW-1017">Isopeptide bond</keyword>
<keyword id="KW-0488">Methylation</keyword>
<keyword id="KW-0539">Nucleus</keyword>
<keyword id="KW-1185">Reference proteome</keyword>
<keyword id="KW-0687">Ribonucleoprotein</keyword>
<keyword id="KW-0689">Ribosomal protein</keyword>
<keyword id="KW-0832">Ubl conjugation</keyword>
<gene>
    <name type="primary">UBA52</name>
    <name type="synonym">UBCEP2</name>
</gene>
<proteinExistence type="evidence at transcript level"/>
<feature type="chain" id="PRO_0000396441" description="Ubiquitin">
    <location>
        <begin position="1" status="less than"/>
        <end position="17"/>
    </location>
</feature>
<feature type="chain" id="PRO_0000138755" description="Large ribosomal subunit protein eL40">
    <location>
        <begin position="18"/>
        <end position="69"/>
    </location>
</feature>
<feature type="domain" description="Ubiquitin-like">
    <location>
        <begin position="1" status="less than"/>
        <end position="17"/>
    </location>
</feature>
<feature type="site" description="Essential for function">
    <location>
        <position position="9"/>
    </location>
</feature>
<feature type="site" description="Interacts with activating enzyme">
    <location>
        <position position="13"/>
    </location>
</feature>
<feature type="modified residue" description="N6,N6,N6-trimethyllysine" evidence="3">
    <location>
        <position position="39"/>
    </location>
</feature>
<feature type="cross-link" description="Glycyl lysine isopeptide (Lys-Gly) (interchain with G-Cter in ubiquitin)" evidence="3">
    <location>
        <position position="4"/>
    </location>
</feature>
<feature type="cross-link" description="Glycyl lysine isopeptide (Gly-Lys) (interchain with K-? in acceptor proteins)" evidence="3">
    <location>
        <position position="17"/>
    </location>
</feature>
<feature type="non-terminal residue">
    <location>
        <position position="1"/>
    </location>
</feature>
<name>RL40_CHICK</name>
<organism>
    <name type="scientific">Gallus gallus</name>
    <name type="common">Chicken</name>
    <dbReference type="NCBI Taxonomy" id="9031"/>
    <lineage>
        <taxon>Eukaryota</taxon>
        <taxon>Metazoa</taxon>
        <taxon>Chordata</taxon>
        <taxon>Craniata</taxon>
        <taxon>Vertebrata</taxon>
        <taxon>Euteleostomi</taxon>
        <taxon>Archelosauria</taxon>
        <taxon>Archosauria</taxon>
        <taxon>Dinosauria</taxon>
        <taxon>Saurischia</taxon>
        <taxon>Theropoda</taxon>
        <taxon>Coelurosauria</taxon>
        <taxon>Aves</taxon>
        <taxon>Neognathae</taxon>
        <taxon>Galloanserae</taxon>
        <taxon>Galliformes</taxon>
        <taxon>Phasianidae</taxon>
        <taxon>Phasianinae</taxon>
        <taxon>Gallus</taxon>
    </lineage>
</organism>
<evidence type="ECO:0000250" key="1"/>
<evidence type="ECO:0000250" key="2">
    <source>
        <dbReference type="UniProtKB" id="P62984"/>
    </source>
</evidence>
<evidence type="ECO:0000250" key="3">
    <source>
        <dbReference type="UniProtKB" id="P62987"/>
    </source>
</evidence>
<evidence type="ECO:0000305" key="4"/>
<reference key="1">
    <citation type="journal article" date="1988" name="Nucleic Acids Res.">
        <title>cDNA encoding a chicken ubiquitin-fusion protein identical to the corresponding human protein.</title>
        <authorList>
            <person name="Mezquita J."/>
            <person name="Pau M."/>
            <person name="Mezquita C."/>
        </authorList>
    </citation>
    <scope>NUCLEOTIDE SEQUENCE [MRNA]</scope>
    <source>
        <tissue>Spermatid</tissue>
    </source>
</reference>
<comment type="function">
    <molecule>Ubiquitin</molecule>
    <text evidence="3">Exists either covalently attached to another protein, or free (unanchored). When covalently bound, it is conjugated to target proteins via an isopeptide bond either as a monomer (monoubiquitin), a polymer linked via different Lys residues of the ubiquitin (polyubiquitin chains) or a linear polymer linked via the initiator Met of the ubiquitin (linear polyubiquitin chains). Polyubiquitin chains, when attached to a target protein, have different functions depending on the Lys residue of the ubiquitin that is linked: Lys-6-linked may be involved in DNA repair; Lys-11-linked is involved in ERAD (endoplasmic reticulum-associated degradation) and in cell-cycle regulation; Lys-29-linked is involved in proteotoxic stress response and cell cycle; Lys-33-linked is involved in kinase modification; Lys-48-linked is involved in protein degradation via the proteasome; Lys-63-linked is involved in endocytosis, DNA-damage responses as well as in signaling processes leading to activation of the transcription factor NF-kappa-B. Linear polymer chains formed via attachment by the initiator Met lead to cell signaling. Ubiquitin is usually conjugated to Lys residues of target proteins, however, in rare cases, conjugation to Cys or Ser residues has been observed. When polyubiquitin is free (unanchored-polyubiquitin), it also has distinct roles, such as in activation of protein kinases, and in signaling (By similarity).</text>
</comment>
<comment type="function">
    <molecule>Large ribosomal subunit protein eL40</molecule>
    <text evidence="3">Component of the 60S subunit of the ribosome.</text>
</comment>
<comment type="subunit">
    <molecule>Large ribosomal subunit protein eL40</molecule>
    <text evidence="1">Part of the 60S ribosomal subunit.</text>
</comment>
<comment type="subcellular location">
    <molecule>Ubiquitin</molecule>
    <subcellularLocation>
        <location evidence="1">Cytoplasm</location>
    </subcellularLocation>
    <subcellularLocation>
        <location evidence="1">Nucleus</location>
    </subcellularLocation>
</comment>
<comment type="subcellular location">
    <molecule>Large ribosomal subunit protein eL40</molecule>
    <subcellularLocation>
        <location evidence="2">Cytoplasm</location>
    </subcellularLocation>
</comment>
<comment type="PTM">
    <molecule>Large ribosomal subunit protein eL40</molecule>
    <text evidence="3">Trimethylation of Lys-39 ('Lys-22' of the mature chain) by SMYD5 promotes translation elongation and protein synthesis.</text>
</comment>
<comment type="miscellaneous">
    <text>Ubiquitin is encoded by 4 different genes. Uba52 and Rps27a genes code for a single copy of ubiquitin fused to the ribosomal proteins eL40 and eS31, respectively. UBB and UBC genes code for a polyubiquitin precursor with exact head to tail repeats, the number of repeats differ between species and strains.</text>
</comment>
<comment type="similarity">
    <text evidence="4">In the N-terminal section; belongs to the ubiquitin family.</text>
</comment>
<comment type="similarity">
    <text evidence="4">In the C-terminal section; belongs to the eukaryotic ribosomal protein eL40 family.</text>
</comment>